<feature type="chain" id="PRO_0000166735" description="Thioredoxin reductase">
    <location>
        <begin position="1"/>
        <end position="319"/>
    </location>
</feature>
<feature type="binding site" evidence="2">
    <location>
        <begin position="37"/>
        <end position="44"/>
    </location>
    <ligand>
        <name>FAD</name>
        <dbReference type="ChEBI" id="CHEBI:57692"/>
    </ligand>
</feature>
<feature type="binding site" evidence="2">
    <location>
        <begin position="279"/>
        <end position="288"/>
    </location>
    <ligand>
        <name>FAD</name>
        <dbReference type="ChEBI" id="CHEBI:57692"/>
    </ligand>
</feature>
<feature type="disulfide bond" description="Redox-active" evidence="2">
    <location>
        <begin position="136"/>
        <end position="139"/>
    </location>
</feature>
<accession>Q928B5</accession>
<evidence type="ECO:0000250" key="1"/>
<evidence type="ECO:0000250" key="2">
    <source>
        <dbReference type="UniProtKB" id="P0A9P4"/>
    </source>
</evidence>
<evidence type="ECO:0000305" key="3"/>
<gene>
    <name type="primary">trxB</name>
    <name type="ordered locus">lin2621</name>
</gene>
<name>TRXB_LISIN</name>
<reference key="1">
    <citation type="journal article" date="2001" name="Science">
        <title>Comparative genomics of Listeria species.</title>
        <authorList>
            <person name="Glaser P."/>
            <person name="Frangeul L."/>
            <person name="Buchrieser C."/>
            <person name="Rusniok C."/>
            <person name="Amend A."/>
            <person name="Baquero F."/>
            <person name="Berche P."/>
            <person name="Bloecker H."/>
            <person name="Brandt P."/>
            <person name="Chakraborty T."/>
            <person name="Charbit A."/>
            <person name="Chetouani F."/>
            <person name="Couve E."/>
            <person name="de Daruvar A."/>
            <person name="Dehoux P."/>
            <person name="Domann E."/>
            <person name="Dominguez-Bernal G."/>
            <person name="Duchaud E."/>
            <person name="Durant L."/>
            <person name="Dussurget O."/>
            <person name="Entian K.-D."/>
            <person name="Fsihi H."/>
            <person name="Garcia-del Portillo F."/>
            <person name="Garrido P."/>
            <person name="Gautier L."/>
            <person name="Goebel W."/>
            <person name="Gomez-Lopez N."/>
            <person name="Hain T."/>
            <person name="Hauf J."/>
            <person name="Jackson D."/>
            <person name="Jones L.-M."/>
            <person name="Kaerst U."/>
            <person name="Kreft J."/>
            <person name="Kuhn M."/>
            <person name="Kunst F."/>
            <person name="Kurapkat G."/>
            <person name="Madueno E."/>
            <person name="Maitournam A."/>
            <person name="Mata Vicente J."/>
            <person name="Ng E."/>
            <person name="Nedjari H."/>
            <person name="Nordsiek G."/>
            <person name="Novella S."/>
            <person name="de Pablos B."/>
            <person name="Perez-Diaz J.-C."/>
            <person name="Purcell R."/>
            <person name="Remmel B."/>
            <person name="Rose M."/>
            <person name="Schlueter T."/>
            <person name="Simoes N."/>
            <person name="Tierrez A."/>
            <person name="Vazquez-Boland J.-A."/>
            <person name="Voss H."/>
            <person name="Wehland J."/>
            <person name="Cossart P."/>
        </authorList>
    </citation>
    <scope>NUCLEOTIDE SEQUENCE [LARGE SCALE GENOMIC DNA]</scope>
    <source>
        <strain>ATCC BAA-680 / CLIP 11262</strain>
    </source>
</reference>
<sequence>MASEEKIYDVIIIGAGPAGMTAALYTSRADLDTLMIERGVPGGQMVNTAEVENYPGFDSILGPDLSDKMLSGAKQFGAEYAYGDIKEVIDGKEFKTVTAGSKTYKARAIIIATGAEHRKLGAAGEEELSGRGVSYCAVCDGAFFKNRELVVVGGGDSAVEEGTYLTRYADKVTIVHRRDKLRAQQILQDRAFKDEKVDFIWNNTVEEIIGDGKKVTSVKLVSTVDGSESIMPVDGVFIYVGLVPLTKAFLSLGITDEEGYIVTDEEMRTNLPGIFAAGDVRAKSLRQIVTATGDGGLAGQNAQKYVEELKEALEAEAAK</sequence>
<organism>
    <name type="scientific">Listeria innocua serovar 6a (strain ATCC BAA-680 / CLIP 11262)</name>
    <dbReference type="NCBI Taxonomy" id="272626"/>
    <lineage>
        <taxon>Bacteria</taxon>
        <taxon>Bacillati</taxon>
        <taxon>Bacillota</taxon>
        <taxon>Bacilli</taxon>
        <taxon>Bacillales</taxon>
        <taxon>Listeriaceae</taxon>
        <taxon>Listeria</taxon>
    </lineage>
</organism>
<comment type="catalytic activity">
    <reaction>
        <text>[thioredoxin]-dithiol + NADP(+) = [thioredoxin]-disulfide + NADPH + H(+)</text>
        <dbReference type="Rhea" id="RHEA:20345"/>
        <dbReference type="Rhea" id="RHEA-COMP:10698"/>
        <dbReference type="Rhea" id="RHEA-COMP:10700"/>
        <dbReference type="ChEBI" id="CHEBI:15378"/>
        <dbReference type="ChEBI" id="CHEBI:29950"/>
        <dbReference type="ChEBI" id="CHEBI:50058"/>
        <dbReference type="ChEBI" id="CHEBI:57783"/>
        <dbReference type="ChEBI" id="CHEBI:58349"/>
        <dbReference type="EC" id="1.8.1.9"/>
    </reaction>
</comment>
<comment type="cofactor">
    <cofactor evidence="2">
        <name>FAD</name>
        <dbReference type="ChEBI" id="CHEBI:57692"/>
    </cofactor>
    <text evidence="2">Binds 1 FAD per subunit.</text>
</comment>
<comment type="subunit">
    <text evidence="2">Homodimer.</text>
</comment>
<comment type="subcellular location">
    <subcellularLocation>
        <location evidence="1">Cytoplasm</location>
    </subcellularLocation>
</comment>
<comment type="miscellaneous">
    <text>The active site is a redox-active disulfide bond.</text>
</comment>
<comment type="similarity">
    <text evidence="3">Belongs to the class-II pyridine nucleotide-disulfide oxidoreductase family.</text>
</comment>
<dbReference type="EC" id="1.8.1.9"/>
<dbReference type="EMBL" id="AL596173">
    <property type="protein sequence ID" value="CAC97848.1"/>
    <property type="molecule type" value="Genomic_DNA"/>
</dbReference>
<dbReference type="PIR" id="AH1759">
    <property type="entry name" value="AH1759"/>
</dbReference>
<dbReference type="RefSeq" id="WP_003772358.1">
    <property type="nucleotide sequence ID" value="NC_003212.1"/>
</dbReference>
<dbReference type="SMR" id="Q928B5"/>
<dbReference type="STRING" id="272626.gene:17567002"/>
<dbReference type="GeneID" id="93235885"/>
<dbReference type="KEGG" id="lin:trxB"/>
<dbReference type="eggNOG" id="COG0492">
    <property type="taxonomic scope" value="Bacteria"/>
</dbReference>
<dbReference type="HOGENOM" id="CLU_031864_5_1_9"/>
<dbReference type="OrthoDB" id="9806179at2"/>
<dbReference type="Proteomes" id="UP000002513">
    <property type="component" value="Chromosome"/>
</dbReference>
<dbReference type="GO" id="GO:0005737">
    <property type="term" value="C:cytoplasm"/>
    <property type="evidence" value="ECO:0007669"/>
    <property type="project" value="UniProtKB-SubCell"/>
</dbReference>
<dbReference type="GO" id="GO:0004791">
    <property type="term" value="F:thioredoxin-disulfide reductase (NADPH) activity"/>
    <property type="evidence" value="ECO:0007669"/>
    <property type="project" value="UniProtKB-EC"/>
</dbReference>
<dbReference type="GO" id="GO:0019430">
    <property type="term" value="P:removal of superoxide radicals"/>
    <property type="evidence" value="ECO:0007669"/>
    <property type="project" value="InterPro"/>
</dbReference>
<dbReference type="Gene3D" id="3.50.50.60">
    <property type="entry name" value="FAD/NAD(P)-binding domain"/>
    <property type="match status" value="2"/>
</dbReference>
<dbReference type="InterPro" id="IPR036188">
    <property type="entry name" value="FAD/NAD-bd_sf"/>
</dbReference>
<dbReference type="InterPro" id="IPR023753">
    <property type="entry name" value="FAD/NAD-binding_dom"/>
</dbReference>
<dbReference type="InterPro" id="IPR050097">
    <property type="entry name" value="Ferredoxin-NADP_redctase_2"/>
</dbReference>
<dbReference type="InterPro" id="IPR008255">
    <property type="entry name" value="Pyr_nucl-diS_OxRdtase_2_AS"/>
</dbReference>
<dbReference type="InterPro" id="IPR005982">
    <property type="entry name" value="Thioredox_Rdtase"/>
</dbReference>
<dbReference type="NCBIfam" id="TIGR01292">
    <property type="entry name" value="TRX_reduct"/>
    <property type="match status" value="1"/>
</dbReference>
<dbReference type="PANTHER" id="PTHR48105">
    <property type="entry name" value="THIOREDOXIN REDUCTASE 1-RELATED-RELATED"/>
    <property type="match status" value="1"/>
</dbReference>
<dbReference type="Pfam" id="PF07992">
    <property type="entry name" value="Pyr_redox_2"/>
    <property type="match status" value="1"/>
</dbReference>
<dbReference type="PRINTS" id="PR00368">
    <property type="entry name" value="FADPNR"/>
</dbReference>
<dbReference type="PRINTS" id="PR00469">
    <property type="entry name" value="PNDRDTASEII"/>
</dbReference>
<dbReference type="SUPFAM" id="SSF51905">
    <property type="entry name" value="FAD/NAD(P)-binding domain"/>
    <property type="match status" value="1"/>
</dbReference>
<dbReference type="PROSITE" id="PS00573">
    <property type="entry name" value="PYRIDINE_REDOX_2"/>
    <property type="match status" value="1"/>
</dbReference>
<protein>
    <recommendedName>
        <fullName>Thioredoxin reductase</fullName>
        <shortName>TRXR</shortName>
        <ecNumber>1.8.1.9</ecNumber>
    </recommendedName>
</protein>
<proteinExistence type="inferred from homology"/>
<keyword id="KW-0963">Cytoplasm</keyword>
<keyword id="KW-1015">Disulfide bond</keyword>
<keyword id="KW-0274">FAD</keyword>
<keyword id="KW-0285">Flavoprotein</keyword>
<keyword id="KW-0521">NADP</keyword>
<keyword id="KW-0560">Oxidoreductase</keyword>
<keyword id="KW-0676">Redox-active center</keyword>